<comment type="function">
    <text evidence="1">Required for maturation of urease via the functional incorporation of the urease nickel metallocenter.</text>
</comment>
<comment type="subunit">
    <text evidence="1">UreD, UreF and UreG form a complex that acts as a GTP-hydrolysis-dependent molecular chaperone, activating the urease apoprotein by helping to assemble the nickel containing metallocenter of UreC. The UreE protein probably delivers the nickel.</text>
</comment>
<comment type="subcellular location">
    <subcellularLocation>
        <location evidence="1">Cytoplasm</location>
    </subcellularLocation>
</comment>
<comment type="similarity">
    <text evidence="1">Belongs to the UreD family.</text>
</comment>
<keyword id="KW-0143">Chaperone</keyword>
<keyword id="KW-0963">Cytoplasm</keyword>
<keyword id="KW-0996">Nickel insertion</keyword>
<proteinExistence type="inferred from homology"/>
<name>URED_PSEPG</name>
<protein>
    <recommendedName>
        <fullName evidence="1">Urease accessory protein UreD</fullName>
    </recommendedName>
</protein>
<reference key="1">
    <citation type="submission" date="2008-01" db="EMBL/GenBank/DDBJ databases">
        <title>Complete sequence of Pseudomonas putida GB-1.</title>
        <authorList>
            <consortium name="US DOE Joint Genome Institute"/>
            <person name="Copeland A."/>
            <person name="Lucas S."/>
            <person name="Lapidus A."/>
            <person name="Barry K."/>
            <person name="Glavina del Rio T."/>
            <person name="Dalin E."/>
            <person name="Tice H."/>
            <person name="Pitluck S."/>
            <person name="Bruce D."/>
            <person name="Goodwin L."/>
            <person name="Chertkov O."/>
            <person name="Brettin T."/>
            <person name="Detter J.C."/>
            <person name="Han C."/>
            <person name="Kuske C.R."/>
            <person name="Schmutz J."/>
            <person name="Larimer F."/>
            <person name="Land M."/>
            <person name="Hauser L."/>
            <person name="Kyrpides N."/>
            <person name="Kim E."/>
            <person name="McCarthy J.K."/>
            <person name="Richardson P."/>
        </authorList>
    </citation>
    <scope>NUCLEOTIDE SEQUENCE [LARGE SCALE GENOMIC DNA]</scope>
    <source>
        <strain>GB-1</strain>
    </source>
</reference>
<sequence length="277" mass="30531">MSLAEQIEQQQGDAGWSAHLQLRFVQRGDVTRLGAWKHFGPLLVQRPFYPEGSPCHVYVLHPPGGIVAGDRLELNIHLEPGSHALLTMPGASKFYRSIGPTARLTQRFHLAAGSTLEWLPQDSIFFSGARASLASRFSLEPGARLLAWETLCLGRPVMHERFDHGTLDSLLHIELPDEVGLHERLRIAGGHLDKLGGHPLLATFCAAPADQAVLEQVRSLLDELGNPAGATLLGSLLVIRLLDHDNQHLQRTLQRLWHVLRPAILGLPACPPRIWAT</sequence>
<organism>
    <name type="scientific">Pseudomonas putida (strain GB-1)</name>
    <dbReference type="NCBI Taxonomy" id="76869"/>
    <lineage>
        <taxon>Bacteria</taxon>
        <taxon>Pseudomonadati</taxon>
        <taxon>Pseudomonadota</taxon>
        <taxon>Gammaproteobacteria</taxon>
        <taxon>Pseudomonadales</taxon>
        <taxon>Pseudomonadaceae</taxon>
        <taxon>Pseudomonas</taxon>
    </lineage>
</organism>
<feature type="chain" id="PRO_0000340490" description="Urease accessory protein UreD">
    <location>
        <begin position="1"/>
        <end position="277"/>
    </location>
</feature>
<evidence type="ECO:0000255" key="1">
    <source>
        <dbReference type="HAMAP-Rule" id="MF_01384"/>
    </source>
</evidence>
<dbReference type="EMBL" id="CP000926">
    <property type="protein sequence ID" value="ABY98832.1"/>
    <property type="molecule type" value="Genomic_DNA"/>
</dbReference>
<dbReference type="RefSeq" id="WP_012272564.1">
    <property type="nucleotide sequence ID" value="NC_010322.1"/>
</dbReference>
<dbReference type="SMR" id="B0KV00"/>
<dbReference type="KEGG" id="ppg:PputGB1_2938"/>
<dbReference type="eggNOG" id="COG0829">
    <property type="taxonomic scope" value="Bacteria"/>
</dbReference>
<dbReference type="HOGENOM" id="CLU_056339_0_0_6"/>
<dbReference type="Proteomes" id="UP000002157">
    <property type="component" value="Chromosome"/>
</dbReference>
<dbReference type="GO" id="GO:0005737">
    <property type="term" value="C:cytoplasm"/>
    <property type="evidence" value="ECO:0007669"/>
    <property type="project" value="UniProtKB-SubCell"/>
</dbReference>
<dbReference type="GO" id="GO:0016151">
    <property type="term" value="F:nickel cation binding"/>
    <property type="evidence" value="ECO:0007669"/>
    <property type="project" value="UniProtKB-UniRule"/>
</dbReference>
<dbReference type="HAMAP" id="MF_01384">
    <property type="entry name" value="UreD"/>
    <property type="match status" value="1"/>
</dbReference>
<dbReference type="InterPro" id="IPR002669">
    <property type="entry name" value="UreD"/>
</dbReference>
<dbReference type="PANTHER" id="PTHR33643">
    <property type="entry name" value="UREASE ACCESSORY PROTEIN D"/>
    <property type="match status" value="1"/>
</dbReference>
<dbReference type="PANTHER" id="PTHR33643:SF1">
    <property type="entry name" value="UREASE ACCESSORY PROTEIN D"/>
    <property type="match status" value="1"/>
</dbReference>
<dbReference type="Pfam" id="PF01774">
    <property type="entry name" value="UreD"/>
    <property type="match status" value="1"/>
</dbReference>
<gene>
    <name evidence="1" type="primary">ureD</name>
    <name type="ordered locus">PputGB1_2938</name>
</gene>
<accession>B0KV00</accession>